<name>RHAB_YERPG</name>
<reference key="1">
    <citation type="journal article" date="2010" name="J. Bacteriol.">
        <title>Genome sequence of the deep-rooted Yersinia pestis strain Angola reveals new insights into the evolution and pangenome of the plague bacterium.</title>
        <authorList>
            <person name="Eppinger M."/>
            <person name="Worsham P.L."/>
            <person name="Nikolich M.P."/>
            <person name="Riley D.R."/>
            <person name="Sebastian Y."/>
            <person name="Mou S."/>
            <person name="Achtman M."/>
            <person name="Lindler L.E."/>
            <person name="Ravel J."/>
        </authorList>
    </citation>
    <scope>NUCLEOTIDE SEQUENCE [LARGE SCALE GENOMIC DNA]</scope>
    <source>
        <strain>Angola</strain>
    </source>
</reference>
<keyword id="KW-0067">ATP-binding</keyword>
<keyword id="KW-1015">Disulfide bond</keyword>
<keyword id="KW-0418">Kinase</keyword>
<keyword id="KW-0460">Magnesium</keyword>
<keyword id="KW-0547">Nucleotide-binding</keyword>
<keyword id="KW-0684">Rhamnose metabolism</keyword>
<keyword id="KW-0808">Transferase</keyword>
<accession>A9QYS1</accession>
<comment type="function">
    <text evidence="1">Involved in the catabolism of L-rhamnose (6-deoxy-L-mannose). Catalyzes the transfer of the gamma-phosphate group from ATP to the 1-hydroxyl group of L-rhamnulose to yield L-rhamnulose 1-phosphate.</text>
</comment>
<comment type="catalytic activity">
    <reaction evidence="1">
        <text>L-rhamnulose + ATP = L-rhamnulose 1-phosphate + ADP + H(+)</text>
        <dbReference type="Rhea" id="RHEA:20117"/>
        <dbReference type="ChEBI" id="CHEBI:15378"/>
        <dbReference type="ChEBI" id="CHEBI:17897"/>
        <dbReference type="ChEBI" id="CHEBI:30616"/>
        <dbReference type="ChEBI" id="CHEBI:58313"/>
        <dbReference type="ChEBI" id="CHEBI:456216"/>
        <dbReference type="EC" id="2.7.1.5"/>
    </reaction>
</comment>
<comment type="cofactor">
    <cofactor evidence="1">
        <name>Mg(2+)</name>
        <dbReference type="ChEBI" id="CHEBI:18420"/>
    </cofactor>
</comment>
<comment type="pathway">
    <text evidence="1">Carbohydrate degradation; L-rhamnose degradation; glycerone phosphate from L-rhamnose: step 2/3.</text>
</comment>
<comment type="similarity">
    <text evidence="1">Belongs to the rhamnulokinase family.</text>
</comment>
<sequence length="485" mass="53500">MVAIDLGASSGRVMLASYYPGQQQLTLREVCRFTNQIKSIDGSDVWDIDAIEQSIREGLSQLDSEGIALDSIGIDSWGVDFVLLDKQGKRIGQPVYYRDSRTQGVMARAQQTLGSNAIYRRTGIQFLPFNTLYQLRALSEQQPHLLADVAHLLLIPDYLHYRLTGQLNWEYTNASTTQLLNIETGDWDSDLLAYAGVPAHWFAKPGKPGNTIGYWHSANGQQVPVVAVATHDTASAVLAAPLIDADAAYLSSGTWSLMGFESGTPLTHQQAQCSNITNEGGAEGRYRVLKNIMGLWLLQRATDELQIDDLPQLIEQAARQPACRSLINPNDSRFINPPNMCREIQNACREHQFPVPNTAAQLARCIFDSLAMLYRQVAQELATLRGRPISHLHIVGGGCQNQFLNQLCADACGLNVSMGPVEASTLGNIGSQLISLGEVADVTHYRRIVANNFPLHHLSPHDNSDFAAHWLQFQSLSQLPKELCI</sequence>
<proteinExistence type="inferred from homology"/>
<feature type="chain" id="PRO_1000146556" description="Rhamnulokinase">
    <location>
        <begin position="1"/>
        <end position="485"/>
    </location>
</feature>
<feature type="active site" description="Proton acceptor" evidence="1">
    <location>
        <position position="232"/>
    </location>
</feature>
<feature type="binding site" evidence="1">
    <location>
        <begin position="8"/>
        <end position="12"/>
    </location>
    <ligand>
        <name>ATP</name>
        <dbReference type="ChEBI" id="CHEBI:30616"/>
    </ligand>
</feature>
<feature type="binding site" evidence="1">
    <location>
        <position position="78"/>
    </location>
    <ligand>
        <name>substrate</name>
    </ligand>
</feature>
<feature type="binding site" evidence="1">
    <location>
        <begin position="231"/>
        <end position="233"/>
    </location>
    <ligand>
        <name>substrate</name>
    </ligand>
</feature>
<feature type="binding site" evidence="1">
    <location>
        <position position="254"/>
    </location>
    <ligand>
        <name>ATP</name>
        <dbReference type="ChEBI" id="CHEBI:30616"/>
    </ligand>
</feature>
<feature type="binding site" evidence="1">
    <location>
        <position position="291"/>
    </location>
    <ligand>
        <name>substrate</name>
    </ligand>
</feature>
<feature type="binding site" evidence="1">
    <location>
        <position position="299"/>
    </location>
    <ligand>
        <name>ATP</name>
        <dbReference type="ChEBI" id="CHEBI:30616"/>
    </ligand>
</feature>
<feature type="binding site" evidence="1">
    <location>
        <position position="397"/>
    </location>
    <ligand>
        <name>ATP</name>
        <dbReference type="ChEBI" id="CHEBI:30616"/>
    </ligand>
</feature>
<feature type="disulfide bond" evidence="1">
    <location>
        <begin position="348"/>
        <end position="365"/>
    </location>
</feature>
<feature type="disulfide bond" evidence="1">
    <location>
        <begin position="408"/>
        <end position="412"/>
    </location>
</feature>
<dbReference type="EC" id="2.7.1.5" evidence="1"/>
<dbReference type="EMBL" id="CP000901">
    <property type="protein sequence ID" value="ABX86722.1"/>
    <property type="molecule type" value="Genomic_DNA"/>
</dbReference>
<dbReference type="RefSeq" id="WP_012229112.1">
    <property type="nucleotide sequence ID" value="NC_010159.1"/>
</dbReference>
<dbReference type="SMR" id="A9QYS1"/>
<dbReference type="KEGG" id="ypg:YpAngola_A0743"/>
<dbReference type="UniPathway" id="UPA00541">
    <property type="reaction ID" value="UER00602"/>
</dbReference>
<dbReference type="GO" id="GO:0005829">
    <property type="term" value="C:cytosol"/>
    <property type="evidence" value="ECO:0007669"/>
    <property type="project" value="TreeGrafter"/>
</dbReference>
<dbReference type="GO" id="GO:0005524">
    <property type="term" value="F:ATP binding"/>
    <property type="evidence" value="ECO:0007669"/>
    <property type="project" value="UniProtKB-KW"/>
</dbReference>
<dbReference type="GO" id="GO:0004370">
    <property type="term" value="F:glycerol kinase activity"/>
    <property type="evidence" value="ECO:0007669"/>
    <property type="project" value="TreeGrafter"/>
</dbReference>
<dbReference type="GO" id="GO:0008993">
    <property type="term" value="F:rhamnulokinase activity"/>
    <property type="evidence" value="ECO:0007669"/>
    <property type="project" value="UniProtKB-UniRule"/>
</dbReference>
<dbReference type="GO" id="GO:0006071">
    <property type="term" value="P:glycerol metabolic process"/>
    <property type="evidence" value="ECO:0007669"/>
    <property type="project" value="TreeGrafter"/>
</dbReference>
<dbReference type="GO" id="GO:0019301">
    <property type="term" value="P:rhamnose catabolic process"/>
    <property type="evidence" value="ECO:0007669"/>
    <property type="project" value="UniProtKB-UniRule"/>
</dbReference>
<dbReference type="CDD" id="cd07771">
    <property type="entry name" value="ASKHA_NBD_FGGY_RhaB-like"/>
    <property type="match status" value="1"/>
</dbReference>
<dbReference type="FunFam" id="3.30.420.40:FF:000064">
    <property type="entry name" value="Rhamnulokinase"/>
    <property type="match status" value="1"/>
</dbReference>
<dbReference type="FunFam" id="3.30.420.40:FF:000073">
    <property type="entry name" value="Rhamnulokinase"/>
    <property type="match status" value="1"/>
</dbReference>
<dbReference type="Gene3D" id="3.30.420.40">
    <property type="match status" value="2"/>
</dbReference>
<dbReference type="HAMAP" id="MF_01535">
    <property type="entry name" value="Rhamnulokinase"/>
    <property type="match status" value="1"/>
</dbReference>
<dbReference type="InterPro" id="IPR043129">
    <property type="entry name" value="ATPase_NBD"/>
</dbReference>
<dbReference type="InterPro" id="IPR000577">
    <property type="entry name" value="Carb_kinase_FGGY"/>
</dbReference>
<dbReference type="InterPro" id="IPR018485">
    <property type="entry name" value="FGGY_C"/>
</dbReference>
<dbReference type="InterPro" id="IPR018484">
    <property type="entry name" value="FGGY_N"/>
</dbReference>
<dbReference type="InterPro" id="IPR013449">
    <property type="entry name" value="Rhamnulokinase"/>
</dbReference>
<dbReference type="NCBIfam" id="NF007925">
    <property type="entry name" value="PRK10640.1"/>
    <property type="match status" value="1"/>
</dbReference>
<dbReference type="NCBIfam" id="TIGR02627">
    <property type="entry name" value="rhamnulo_kin"/>
    <property type="match status" value="1"/>
</dbReference>
<dbReference type="PANTHER" id="PTHR10196:SF93">
    <property type="entry name" value="L-RHAMNULOKINASE"/>
    <property type="match status" value="1"/>
</dbReference>
<dbReference type="PANTHER" id="PTHR10196">
    <property type="entry name" value="SUGAR KINASE"/>
    <property type="match status" value="1"/>
</dbReference>
<dbReference type="Pfam" id="PF02782">
    <property type="entry name" value="FGGY_C"/>
    <property type="match status" value="1"/>
</dbReference>
<dbReference type="Pfam" id="PF00370">
    <property type="entry name" value="FGGY_N"/>
    <property type="match status" value="1"/>
</dbReference>
<dbReference type="PIRSF" id="PIRSF000538">
    <property type="entry name" value="GlpK"/>
    <property type="match status" value="1"/>
</dbReference>
<dbReference type="SUPFAM" id="SSF53067">
    <property type="entry name" value="Actin-like ATPase domain"/>
    <property type="match status" value="2"/>
</dbReference>
<evidence type="ECO:0000255" key="1">
    <source>
        <dbReference type="HAMAP-Rule" id="MF_01535"/>
    </source>
</evidence>
<organism>
    <name type="scientific">Yersinia pestis bv. Antiqua (strain Angola)</name>
    <dbReference type="NCBI Taxonomy" id="349746"/>
    <lineage>
        <taxon>Bacteria</taxon>
        <taxon>Pseudomonadati</taxon>
        <taxon>Pseudomonadota</taxon>
        <taxon>Gammaproteobacteria</taxon>
        <taxon>Enterobacterales</taxon>
        <taxon>Yersiniaceae</taxon>
        <taxon>Yersinia</taxon>
    </lineage>
</organism>
<gene>
    <name evidence="1" type="primary">rhaB</name>
    <name type="ordered locus">YpAngola_A0743</name>
</gene>
<protein>
    <recommendedName>
        <fullName evidence="1">Rhamnulokinase</fullName>
        <shortName evidence="1">RhaB</shortName>
        <ecNumber evidence="1">2.7.1.5</ecNumber>
    </recommendedName>
    <alternativeName>
        <fullName evidence="1">ATP:L-rhamnulose phosphotransferase</fullName>
    </alternativeName>
    <alternativeName>
        <fullName evidence="1">L-rhamnulose 1-kinase</fullName>
    </alternativeName>
    <alternativeName>
        <fullName evidence="1">Rhamnulose kinase</fullName>
    </alternativeName>
</protein>